<sequence>MKKGIHPEYIPCKVTCVTSGKEIEVLSTKPEMRIDISSFCHPFYTGSDKIADTAGRVEKFKQRYNLK</sequence>
<name>RL31_HELPY</name>
<dbReference type="EMBL" id="AE000511">
    <property type="protein sequence ID" value="AAD07617.1"/>
    <property type="molecule type" value="Genomic_DNA"/>
</dbReference>
<dbReference type="PIR" id="G64588">
    <property type="entry name" value="G64588"/>
</dbReference>
<dbReference type="RefSeq" id="NP_207346.1">
    <property type="nucleotide sequence ID" value="NC_000915.1"/>
</dbReference>
<dbReference type="RefSeq" id="WP_000715278.1">
    <property type="nucleotide sequence ID" value="NC_018939.1"/>
</dbReference>
<dbReference type="SMR" id="P66185"/>
<dbReference type="FunCoup" id="P66185">
    <property type="interactions" value="296"/>
</dbReference>
<dbReference type="IntAct" id="P66185">
    <property type="interactions" value="1"/>
</dbReference>
<dbReference type="STRING" id="85962.HP_0551"/>
<dbReference type="PaxDb" id="85962-C694_02850"/>
<dbReference type="EnsemblBacteria" id="AAD07617">
    <property type="protein sequence ID" value="AAD07617"/>
    <property type="gene ID" value="HP_0551"/>
</dbReference>
<dbReference type="GeneID" id="93236900"/>
<dbReference type="KEGG" id="heo:C694_02850"/>
<dbReference type="KEGG" id="hpy:HP_0551"/>
<dbReference type="PATRIC" id="fig|85962.47.peg.596"/>
<dbReference type="eggNOG" id="COG0254">
    <property type="taxonomic scope" value="Bacteria"/>
</dbReference>
<dbReference type="InParanoid" id="P66185"/>
<dbReference type="OrthoDB" id="9803251at2"/>
<dbReference type="PhylomeDB" id="P66185"/>
<dbReference type="Proteomes" id="UP000000429">
    <property type="component" value="Chromosome"/>
</dbReference>
<dbReference type="GO" id="GO:1990904">
    <property type="term" value="C:ribonucleoprotein complex"/>
    <property type="evidence" value="ECO:0007669"/>
    <property type="project" value="UniProtKB-KW"/>
</dbReference>
<dbReference type="GO" id="GO:0005840">
    <property type="term" value="C:ribosome"/>
    <property type="evidence" value="ECO:0007669"/>
    <property type="project" value="UniProtKB-KW"/>
</dbReference>
<dbReference type="GO" id="GO:0019843">
    <property type="term" value="F:rRNA binding"/>
    <property type="evidence" value="ECO:0007669"/>
    <property type="project" value="UniProtKB-KW"/>
</dbReference>
<dbReference type="GO" id="GO:0003735">
    <property type="term" value="F:structural constituent of ribosome"/>
    <property type="evidence" value="ECO:0007669"/>
    <property type="project" value="InterPro"/>
</dbReference>
<dbReference type="GO" id="GO:0006412">
    <property type="term" value="P:translation"/>
    <property type="evidence" value="ECO:0007669"/>
    <property type="project" value="UniProtKB-UniRule"/>
</dbReference>
<dbReference type="Gene3D" id="4.10.830.30">
    <property type="entry name" value="Ribosomal protein L31"/>
    <property type="match status" value="1"/>
</dbReference>
<dbReference type="HAMAP" id="MF_00501">
    <property type="entry name" value="Ribosomal_bL31_1"/>
    <property type="match status" value="1"/>
</dbReference>
<dbReference type="InterPro" id="IPR034704">
    <property type="entry name" value="Ribosomal_bL28/bL31-like_sf"/>
</dbReference>
<dbReference type="InterPro" id="IPR002150">
    <property type="entry name" value="Ribosomal_bL31"/>
</dbReference>
<dbReference type="InterPro" id="IPR027491">
    <property type="entry name" value="Ribosomal_bL31_A"/>
</dbReference>
<dbReference type="InterPro" id="IPR042105">
    <property type="entry name" value="Ribosomal_bL31_sf"/>
</dbReference>
<dbReference type="NCBIfam" id="TIGR00105">
    <property type="entry name" value="L31"/>
    <property type="match status" value="1"/>
</dbReference>
<dbReference type="NCBIfam" id="NF000612">
    <property type="entry name" value="PRK00019.1"/>
    <property type="match status" value="1"/>
</dbReference>
<dbReference type="NCBIfam" id="NF001809">
    <property type="entry name" value="PRK00528.1"/>
    <property type="match status" value="1"/>
</dbReference>
<dbReference type="PANTHER" id="PTHR33280">
    <property type="entry name" value="50S RIBOSOMAL PROTEIN L31, CHLOROPLASTIC"/>
    <property type="match status" value="1"/>
</dbReference>
<dbReference type="PANTHER" id="PTHR33280:SF6">
    <property type="entry name" value="LARGE RIBOSOMAL SUBUNIT PROTEIN BL31A"/>
    <property type="match status" value="1"/>
</dbReference>
<dbReference type="Pfam" id="PF01197">
    <property type="entry name" value="Ribosomal_L31"/>
    <property type="match status" value="1"/>
</dbReference>
<dbReference type="PRINTS" id="PR01249">
    <property type="entry name" value="RIBOSOMALL31"/>
</dbReference>
<dbReference type="SUPFAM" id="SSF143800">
    <property type="entry name" value="L28p-like"/>
    <property type="match status" value="1"/>
</dbReference>
<dbReference type="PROSITE" id="PS01143">
    <property type="entry name" value="RIBOSOMAL_L31"/>
    <property type="match status" value="1"/>
</dbReference>
<organism>
    <name type="scientific">Helicobacter pylori (strain ATCC 700392 / 26695)</name>
    <name type="common">Campylobacter pylori</name>
    <dbReference type="NCBI Taxonomy" id="85962"/>
    <lineage>
        <taxon>Bacteria</taxon>
        <taxon>Pseudomonadati</taxon>
        <taxon>Campylobacterota</taxon>
        <taxon>Epsilonproteobacteria</taxon>
        <taxon>Campylobacterales</taxon>
        <taxon>Helicobacteraceae</taxon>
        <taxon>Helicobacter</taxon>
    </lineage>
</organism>
<feature type="chain" id="PRO_0000173115" description="Large ribosomal subunit protein bL31">
    <location>
        <begin position="1"/>
        <end position="67"/>
    </location>
</feature>
<accession>P66185</accession>
<accession>P56053</accession>
<protein>
    <recommendedName>
        <fullName evidence="1">Large ribosomal subunit protein bL31</fullName>
    </recommendedName>
    <alternativeName>
        <fullName evidence="2">50S ribosomal protein L31</fullName>
    </alternativeName>
</protein>
<keyword id="KW-1185">Reference proteome</keyword>
<keyword id="KW-0687">Ribonucleoprotein</keyword>
<keyword id="KW-0689">Ribosomal protein</keyword>
<keyword id="KW-0694">RNA-binding</keyword>
<keyword id="KW-0699">rRNA-binding</keyword>
<evidence type="ECO:0000255" key="1">
    <source>
        <dbReference type="HAMAP-Rule" id="MF_00501"/>
    </source>
</evidence>
<evidence type="ECO:0000305" key="2"/>
<comment type="function">
    <text evidence="1">Binds the 23S rRNA.</text>
</comment>
<comment type="subunit">
    <text evidence="1">Part of the 50S ribosomal subunit.</text>
</comment>
<comment type="similarity">
    <text evidence="1">Belongs to the bacterial ribosomal protein bL31 family. Type A subfamily.</text>
</comment>
<reference key="1">
    <citation type="journal article" date="1997" name="Nature">
        <title>The complete genome sequence of the gastric pathogen Helicobacter pylori.</title>
        <authorList>
            <person name="Tomb J.-F."/>
            <person name="White O."/>
            <person name="Kerlavage A.R."/>
            <person name="Clayton R.A."/>
            <person name="Sutton G.G."/>
            <person name="Fleischmann R.D."/>
            <person name="Ketchum K.A."/>
            <person name="Klenk H.-P."/>
            <person name="Gill S.R."/>
            <person name="Dougherty B.A."/>
            <person name="Nelson K.E."/>
            <person name="Quackenbush J."/>
            <person name="Zhou L."/>
            <person name="Kirkness E.F."/>
            <person name="Peterson S.N."/>
            <person name="Loftus B.J."/>
            <person name="Richardson D.L."/>
            <person name="Dodson R.J."/>
            <person name="Khalak H.G."/>
            <person name="Glodek A."/>
            <person name="McKenney K."/>
            <person name="FitzGerald L.M."/>
            <person name="Lee N."/>
            <person name="Adams M.D."/>
            <person name="Hickey E.K."/>
            <person name="Berg D.E."/>
            <person name="Gocayne J.D."/>
            <person name="Utterback T.R."/>
            <person name="Peterson J.D."/>
            <person name="Kelley J.M."/>
            <person name="Cotton M.D."/>
            <person name="Weidman J.F."/>
            <person name="Fujii C."/>
            <person name="Bowman C."/>
            <person name="Watthey L."/>
            <person name="Wallin E."/>
            <person name="Hayes W.S."/>
            <person name="Borodovsky M."/>
            <person name="Karp P.D."/>
            <person name="Smith H.O."/>
            <person name="Fraser C.M."/>
            <person name="Venter J.C."/>
        </authorList>
    </citation>
    <scope>NUCLEOTIDE SEQUENCE [LARGE SCALE GENOMIC DNA]</scope>
    <source>
        <strain>ATCC 700392 / 26695</strain>
    </source>
</reference>
<proteinExistence type="inferred from homology"/>
<gene>
    <name evidence="1" type="primary">rpmE</name>
    <name type="ordered locus">HP_0551</name>
</gene>